<organism>
    <name type="scientific">Escherichia coli (strain K12 / DH10B)</name>
    <dbReference type="NCBI Taxonomy" id="316385"/>
    <lineage>
        <taxon>Bacteria</taxon>
        <taxon>Pseudomonadati</taxon>
        <taxon>Pseudomonadota</taxon>
        <taxon>Gammaproteobacteria</taxon>
        <taxon>Enterobacterales</taxon>
        <taxon>Enterobacteriaceae</taxon>
        <taxon>Escherichia</taxon>
    </lineage>
</organism>
<comment type="function">
    <text evidence="1">Catalyzes the reversible conversion of 2-phosphoglycerate (2-PG) into phosphoenolpyruvate (PEP). It is essential for the degradation of carbohydrates via glycolysis.</text>
</comment>
<comment type="catalytic activity">
    <reaction evidence="1">
        <text>(2R)-2-phosphoglycerate = phosphoenolpyruvate + H2O</text>
        <dbReference type="Rhea" id="RHEA:10164"/>
        <dbReference type="ChEBI" id="CHEBI:15377"/>
        <dbReference type="ChEBI" id="CHEBI:58289"/>
        <dbReference type="ChEBI" id="CHEBI:58702"/>
        <dbReference type="EC" id="4.2.1.11"/>
    </reaction>
</comment>
<comment type="cofactor">
    <cofactor evidence="1">
        <name>Mg(2+)</name>
        <dbReference type="ChEBI" id="CHEBI:18420"/>
    </cofactor>
    <text evidence="1">Binds a second Mg(2+) ion via substrate during catalysis.</text>
</comment>
<comment type="pathway">
    <text evidence="1">Carbohydrate degradation; glycolysis; pyruvate from D-glyceraldehyde 3-phosphate: step 4/5.</text>
</comment>
<comment type="subunit">
    <text evidence="1">Component of the RNA degradosome, a multiprotein complex involved in RNA processing and mRNA degradation.</text>
</comment>
<comment type="subcellular location">
    <subcellularLocation>
        <location evidence="1">Cytoplasm</location>
    </subcellularLocation>
    <subcellularLocation>
        <location evidence="1">Secreted</location>
    </subcellularLocation>
    <subcellularLocation>
        <location evidence="1">Cell surface</location>
    </subcellularLocation>
    <text evidence="1">Fractions of enolase are present in both the cytoplasm and on the cell surface.</text>
</comment>
<comment type="similarity">
    <text evidence="1">Belongs to the enolase family.</text>
</comment>
<evidence type="ECO:0000255" key="1">
    <source>
        <dbReference type="HAMAP-Rule" id="MF_00318"/>
    </source>
</evidence>
<gene>
    <name evidence="1" type="primary">eno</name>
    <name type="ordered locus">ECDH10B_2946</name>
</gene>
<protein>
    <recommendedName>
        <fullName evidence="1">Enolase</fullName>
        <ecNumber evidence="1">4.2.1.11</ecNumber>
    </recommendedName>
    <alternativeName>
        <fullName evidence="1">2-phospho-D-glycerate hydro-lyase</fullName>
    </alternativeName>
    <alternativeName>
        <fullName evidence="1">2-phosphoglycerate dehydratase</fullName>
    </alternativeName>
</protein>
<dbReference type="EC" id="4.2.1.11" evidence="1"/>
<dbReference type="EMBL" id="CP000948">
    <property type="protein sequence ID" value="ACB03893.1"/>
    <property type="molecule type" value="Genomic_DNA"/>
</dbReference>
<dbReference type="RefSeq" id="WP_000036723.1">
    <property type="nucleotide sequence ID" value="NC_010473.1"/>
</dbReference>
<dbReference type="SMR" id="B1XDI9"/>
<dbReference type="GeneID" id="93779219"/>
<dbReference type="KEGG" id="ecd:ECDH10B_2946"/>
<dbReference type="HOGENOM" id="CLU_031223_2_1_6"/>
<dbReference type="UniPathway" id="UPA00109">
    <property type="reaction ID" value="UER00187"/>
</dbReference>
<dbReference type="GO" id="GO:0009986">
    <property type="term" value="C:cell surface"/>
    <property type="evidence" value="ECO:0007669"/>
    <property type="project" value="UniProtKB-SubCell"/>
</dbReference>
<dbReference type="GO" id="GO:0005576">
    <property type="term" value="C:extracellular region"/>
    <property type="evidence" value="ECO:0007669"/>
    <property type="project" value="UniProtKB-SubCell"/>
</dbReference>
<dbReference type="GO" id="GO:0000015">
    <property type="term" value="C:phosphopyruvate hydratase complex"/>
    <property type="evidence" value="ECO:0007669"/>
    <property type="project" value="InterPro"/>
</dbReference>
<dbReference type="GO" id="GO:0000287">
    <property type="term" value="F:magnesium ion binding"/>
    <property type="evidence" value="ECO:0007669"/>
    <property type="project" value="UniProtKB-UniRule"/>
</dbReference>
<dbReference type="GO" id="GO:0004634">
    <property type="term" value="F:phosphopyruvate hydratase activity"/>
    <property type="evidence" value="ECO:0007669"/>
    <property type="project" value="UniProtKB-UniRule"/>
</dbReference>
<dbReference type="GO" id="GO:0006096">
    <property type="term" value="P:glycolytic process"/>
    <property type="evidence" value="ECO:0007669"/>
    <property type="project" value="UniProtKB-UniRule"/>
</dbReference>
<dbReference type="CDD" id="cd03313">
    <property type="entry name" value="enolase"/>
    <property type="match status" value="1"/>
</dbReference>
<dbReference type="FunFam" id="3.20.20.120:FF:000001">
    <property type="entry name" value="Enolase"/>
    <property type="match status" value="1"/>
</dbReference>
<dbReference type="FunFam" id="3.30.390.10:FF:000001">
    <property type="entry name" value="Enolase"/>
    <property type="match status" value="1"/>
</dbReference>
<dbReference type="Gene3D" id="3.20.20.120">
    <property type="entry name" value="Enolase-like C-terminal domain"/>
    <property type="match status" value="1"/>
</dbReference>
<dbReference type="Gene3D" id="3.30.390.10">
    <property type="entry name" value="Enolase-like, N-terminal domain"/>
    <property type="match status" value="1"/>
</dbReference>
<dbReference type="HAMAP" id="MF_00318">
    <property type="entry name" value="Enolase"/>
    <property type="match status" value="1"/>
</dbReference>
<dbReference type="InterPro" id="IPR000941">
    <property type="entry name" value="Enolase"/>
</dbReference>
<dbReference type="InterPro" id="IPR036849">
    <property type="entry name" value="Enolase-like_C_sf"/>
</dbReference>
<dbReference type="InterPro" id="IPR029017">
    <property type="entry name" value="Enolase-like_N"/>
</dbReference>
<dbReference type="InterPro" id="IPR020810">
    <property type="entry name" value="Enolase_C"/>
</dbReference>
<dbReference type="InterPro" id="IPR020809">
    <property type="entry name" value="Enolase_CS"/>
</dbReference>
<dbReference type="InterPro" id="IPR020811">
    <property type="entry name" value="Enolase_N"/>
</dbReference>
<dbReference type="NCBIfam" id="TIGR01060">
    <property type="entry name" value="eno"/>
    <property type="match status" value="1"/>
</dbReference>
<dbReference type="PANTHER" id="PTHR11902">
    <property type="entry name" value="ENOLASE"/>
    <property type="match status" value="1"/>
</dbReference>
<dbReference type="PANTHER" id="PTHR11902:SF1">
    <property type="entry name" value="ENOLASE"/>
    <property type="match status" value="1"/>
</dbReference>
<dbReference type="Pfam" id="PF00113">
    <property type="entry name" value="Enolase_C"/>
    <property type="match status" value="1"/>
</dbReference>
<dbReference type="Pfam" id="PF03952">
    <property type="entry name" value="Enolase_N"/>
    <property type="match status" value="1"/>
</dbReference>
<dbReference type="PIRSF" id="PIRSF001400">
    <property type="entry name" value="Enolase"/>
    <property type="match status" value="1"/>
</dbReference>
<dbReference type="PRINTS" id="PR00148">
    <property type="entry name" value="ENOLASE"/>
</dbReference>
<dbReference type="SFLD" id="SFLDS00001">
    <property type="entry name" value="Enolase"/>
    <property type="match status" value="1"/>
</dbReference>
<dbReference type="SFLD" id="SFLDF00002">
    <property type="entry name" value="enolase"/>
    <property type="match status" value="1"/>
</dbReference>
<dbReference type="SMART" id="SM01192">
    <property type="entry name" value="Enolase_C"/>
    <property type="match status" value="1"/>
</dbReference>
<dbReference type="SMART" id="SM01193">
    <property type="entry name" value="Enolase_N"/>
    <property type="match status" value="1"/>
</dbReference>
<dbReference type="SUPFAM" id="SSF51604">
    <property type="entry name" value="Enolase C-terminal domain-like"/>
    <property type="match status" value="1"/>
</dbReference>
<dbReference type="SUPFAM" id="SSF54826">
    <property type="entry name" value="Enolase N-terminal domain-like"/>
    <property type="match status" value="1"/>
</dbReference>
<dbReference type="PROSITE" id="PS00164">
    <property type="entry name" value="ENOLASE"/>
    <property type="match status" value="1"/>
</dbReference>
<proteinExistence type="inferred from homology"/>
<feature type="chain" id="PRO_1000115860" description="Enolase">
    <location>
        <begin position="1"/>
        <end position="432"/>
    </location>
</feature>
<feature type="active site" description="Proton donor" evidence="1">
    <location>
        <position position="209"/>
    </location>
</feature>
<feature type="active site" description="Proton acceptor" evidence="1">
    <location>
        <position position="342"/>
    </location>
</feature>
<feature type="binding site" evidence="1">
    <location>
        <position position="167"/>
    </location>
    <ligand>
        <name>(2R)-2-phosphoglycerate</name>
        <dbReference type="ChEBI" id="CHEBI:58289"/>
    </ligand>
</feature>
<feature type="binding site" evidence="1">
    <location>
        <position position="246"/>
    </location>
    <ligand>
        <name>Mg(2+)</name>
        <dbReference type="ChEBI" id="CHEBI:18420"/>
    </ligand>
</feature>
<feature type="binding site" evidence="1">
    <location>
        <position position="290"/>
    </location>
    <ligand>
        <name>Mg(2+)</name>
        <dbReference type="ChEBI" id="CHEBI:18420"/>
    </ligand>
</feature>
<feature type="binding site" evidence="1">
    <location>
        <position position="317"/>
    </location>
    <ligand>
        <name>Mg(2+)</name>
        <dbReference type="ChEBI" id="CHEBI:18420"/>
    </ligand>
</feature>
<feature type="binding site" evidence="1">
    <location>
        <position position="342"/>
    </location>
    <ligand>
        <name>(2R)-2-phosphoglycerate</name>
        <dbReference type="ChEBI" id="CHEBI:58289"/>
    </ligand>
</feature>
<feature type="binding site" evidence="1">
    <location>
        <position position="371"/>
    </location>
    <ligand>
        <name>(2R)-2-phosphoglycerate</name>
        <dbReference type="ChEBI" id="CHEBI:58289"/>
    </ligand>
</feature>
<feature type="binding site" evidence="1">
    <location>
        <position position="372"/>
    </location>
    <ligand>
        <name>(2R)-2-phosphoglycerate</name>
        <dbReference type="ChEBI" id="CHEBI:58289"/>
    </ligand>
</feature>
<feature type="binding site" evidence="1">
    <location>
        <position position="393"/>
    </location>
    <ligand>
        <name>(2R)-2-phosphoglycerate</name>
        <dbReference type="ChEBI" id="CHEBI:58289"/>
    </ligand>
</feature>
<reference key="1">
    <citation type="journal article" date="2008" name="J. Bacteriol.">
        <title>The complete genome sequence of Escherichia coli DH10B: insights into the biology of a laboratory workhorse.</title>
        <authorList>
            <person name="Durfee T."/>
            <person name="Nelson R."/>
            <person name="Baldwin S."/>
            <person name="Plunkett G. III"/>
            <person name="Burland V."/>
            <person name="Mau B."/>
            <person name="Petrosino J.F."/>
            <person name="Qin X."/>
            <person name="Muzny D.M."/>
            <person name="Ayele M."/>
            <person name="Gibbs R.A."/>
            <person name="Csorgo B."/>
            <person name="Posfai G."/>
            <person name="Weinstock G.M."/>
            <person name="Blattner F.R."/>
        </authorList>
    </citation>
    <scope>NUCLEOTIDE SEQUENCE [LARGE SCALE GENOMIC DNA]</scope>
    <source>
        <strain>K12 / DH10B</strain>
    </source>
</reference>
<name>ENO_ECODH</name>
<accession>B1XDI9</accession>
<keyword id="KW-0963">Cytoplasm</keyword>
<keyword id="KW-0324">Glycolysis</keyword>
<keyword id="KW-0456">Lyase</keyword>
<keyword id="KW-0460">Magnesium</keyword>
<keyword id="KW-0479">Metal-binding</keyword>
<keyword id="KW-0964">Secreted</keyword>
<sequence length="432" mass="45655">MSKIVKIIGREIIDSRGNPTVEAEVHLEGGFVGMAAAPSGASTGSREALELRDGDKSRFLGKGVTKAVAAVNGPIAQALIGKDAKDQAGIDKIMIDLDGTENKSKFGANAILAVSLANAKAAAAAKGMPLYEHIAELNGTPGKYSMPVPMMNIINGGEHADNNVDIQEFMIQPVGAKTVKEAIRMGSEVFHHLAKVLKAKGMNTAVGDEGGYAPNLGSNAEALAVIAEAVKAAGYELGKDITLAMDCAASEFYKDGKYVLAGEGNKAFTSEEFTHFLEELTKQYPIVSIEDGLDESDWDGFAYQTKVLGDKIQLVGDDLFVTNTKILKEGIEKGIANSILIKFNQIGSLTETLAAIKMAKDAGYTAVISHRSGETEDATIADLAVGTAAGQIKTGSMSRSDRVAKYNQLIRIEEALGEKAPYNGRKEIKGQA</sequence>